<sequence>MLDEKSSNTASVVVLCTAPDEATAQDLAAKVLAEKLAACATLIPGATSLYYWEGKLEQEYEVQMILKTTVSHQQALLECLKSHHPYQTPELLVLPVTHGDTDYLSWLNASLR</sequence>
<comment type="function">
    <text evidence="1">Involved in resistance toward heavy metals.</text>
</comment>
<comment type="cofactor">
    <cofactor evidence="1">
        <name>Cu cation</name>
        <dbReference type="ChEBI" id="CHEBI:23378"/>
    </cofactor>
    <text evidence="1">Binds 1 copper ion per subunit.</text>
</comment>
<comment type="subunit">
    <text evidence="1">Homotrimer.</text>
</comment>
<comment type="subcellular location">
    <subcellularLocation>
        <location evidence="1">Cytoplasm</location>
    </subcellularLocation>
</comment>
<comment type="similarity">
    <text evidence="1">Belongs to the CutA family.</text>
</comment>
<reference key="1">
    <citation type="journal article" date="2006" name="BMC Genomics">
        <title>Complete genome sequence of Shigella flexneri 5b and comparison with Shigella flexneri 2a.</title>
        <authorList>
            <person name="Nie H."/>
            <person name="Yang F."/>
            <person name="Zhang X."/>
            <person name="Yang J."/>
            <person name="Chen L."/>
            <person name="Wang J."/>
            <person name="Xiong Z."/>
            <person name="Peng J."/>
            <person name="Sun L."/>
            <person name="Dong J."/>
            <person name="Xue Y."/>
            <person name="Xu X."/>
            <person name="Chen S."/>
            <person name="Yao Z."/>
            <person name="Shen Y."/>
            <person name="Jin Q."/>
        </authorList>
    </citation>
    <scope>NUCLEOTIDE SEQUENCE [LARGE SCALE GENOMIC DNA]</scope>
    <source>
        <strain>8401</strain>
    </source>
</reference>
<accession>Q0SXE2</accession>
<dbReference type="EMBL" id="CP000266">
    <property type="protein sequence ID" value="ABF06273.1"/>
    <property type="molecule type" value="Genomic_DNA"/>
</dbReference>
<dbReference type="RefSeq" id="WP_000883400.1">
    <property type="nucleotide sequence ID" value="NC_008258.1"/>
</dbReference>
<dbReference type="SMR" id="Q0SXE2"/>
<dbReference type="GeneID" id="93777687"/>
<dbReference type="KEGG" id="sfv:SFV_4293"/>
<dbReference type="HOGENOM" id="CLU_098807_3_0_6"/>
<dbReference type="Proteomes" id="UP000000659">
    <property type="component" value="Chromosome"/>
</dbReference>
<dbReference type="GO" id="GO:0005737">
    <property type="term" value="C:cytoplasm"/>
    <property type="evidence" value="ECO:0007669"/>
    <property type="project" value="UniProtKB-SubCell"/>
</dbReference>
<dbReference type="GO" id="GO:0005507">
    <property type="term" value="F:copper ion binding"/>
    <property type="evidence" value="ECO:0007669"/>
    <property type="project" value="UniProtKB-UniRule"/>
</dbReference>
<dbReference type="GO" id="GO:0010038">
    <property type="term" value="P:response to metal ion"/>
    <property type="evidence" value="ECO:0007669"/>
    <property type="project" value="InterPro"/>
</dbReference>
<dbReference type="FunFam" id="3.30.70.120:FF:000004">
    <property type="entry name" value="Divalent-cation tolerance protein CutA"/>
    <property type="match status" value="1"/>
</dbReference>
<dbReference type="Gene3D" id="3.30.70.120">
    <property type="match status" value="1"/>
</dbReference>
<dbReference type="HAMAP" id="MF_01160">
    <property type="entry name" value="CutA"/>
    <property type="match status" value="1"/>
</dbReference>
<dbReference type="InterPro" id="IPR023700">
    <property type="entry name" value="CutA_Enterobact"/>
</dbReference>
<dbReference type="InterPro" id="IPR004323">
    <property type="entry name" value="Ion_tolerance_CutA"/>
</dbReference>
<dbReference type="InterPro" id="IPR011322">
    <property type="entry name" value="N-reg_PII-like_a/b"/>
</dbReference>
<dbReference type="InterPro" id="IPR015867">
    <property type="entry name" value="N-reg_PII/ATP_PRibTrfase_C"/>
</dbReference>
<dbReference type="NCBIfam" id="NF007930">
    <property type="entry name" value="PRK10645.1"/>
    <property type="match status" value="1"/>
</dbReference>
<dbReference type="PANTHER" id="PTHR23419">
    <property type="entry name" value="DIVALENT CATION TOLERANCE CUTA-RELATED"/>
    <property type="match status" value="1"/>
</dbReference>
<dbReference type="PANTHER" id="PTHR23419:SF8">
    <property type="entry name" value="FI09726P"/>
    <property type="match status" value="1"/>
</dbReference>
<dbReference type="Pfam" id="PF03091">
    <property type="entry name" value="CutA1"/>
    <property type="match status" value="1"/>
</dbReference>
<dbReference type="SUPFAM" id="SSF54913">
    <property type="entry name" value="GlnB-like"/>
    <property type="match status" value="1"/>
</dbReference>
<proteinExistence type="inferred from homology"/>
<organism>
    <name type="scientific">Shigella flexneri serotype 5b (strain 8401)</name>
    <dbReference type="NCBI Taxonomy" id="373384"/>
    <lineage>
        <taxon>Bacteria</taxon>
        <taxon>Pseudomonadati</taxon>
        <taxon>Pseudomonadota</taxon>
        <taxon>Gammaproteobacteria</taxon>
        <taxon>Enterobacterales</taxon>
        <taxon>Enterobacteriaceae</taxon>
        <taxon>Shigella</taxon>
    </lineage>
</organism>
<protein>
    <recommendedName>
        <fullName evidence="1">Divalent-cation tolerance protein CutA</fullName>
    </recommendedName>
</protein>
<keyword id="KW-0186">Copper</keyword>
<keyword id="KW-0963">Cytoplasm</keyword>
<keyword id="KW-0479">Metal-binding</keyword>
<evidence type="ECO:0000255" key="1">
    <source>
        <dbReference type="HAMAP-Rule" id="MF_01160"/>
    </source>
</evidence>
<feature type="chain" id="PRO_0000280487" description="Divalent-cation tolerance protein CutA">
    <location>
        <begin position="1"/>
        <end position="112"/>
    </location>
</feature>
<feature type="binding site" evidence="1">
    <location>
        <position position="16"/>
    </location>
    <ligand>
        <name>Cu cation</name>
        <dbReference type="ChEBI" id="CHEBI:23378"/>
    </ligand>
</feature>
<feature type="binding site" evidence="1">
    <location>
        <position position="83"/>
    </location>
    <ligand>
        <name>Cu cation</name>
        <dbReference type="ChEBI" id="CHEBI:23378"/>
    </ligand>
</feature>
<feature type="binding site" evidence="1">
    <location>
        <position position="84"/>
    </location>
    <ligand>
        <name>Cu cation</name>
        <dbReference type="ChEBI" id="CHEBI:23378"/>
    </ligand>
</feature>
<gene>
    <name evidence="1" type="primary">cutA</name>
    <name type="ordered locus">SFV_4293</name>
</gene>
<name>CUTA_SHIF8</name>